<keyword id="KW-0903">Direct protein sequencing</keyword>
<proteinExistence type="evidence at protein level"/>
<name>SMP16_NAUMA</name>
<reference key="1">
    <citation type="journal article" date="2009" name="ChemBioChem">
        <title>Evolution of nacre: biochemistry and 'shellomics' of the shell organic matrix of the cephalopod Nautilus macromphalus.</title>
        <authorList>
            <person name="Marie B."/>
            <person name="Marin F."/>
            <person name="Marie A."/>
            <person name="Bedouet L."/>
            <person name="Dubost L."/>
            <person name="Alcaraz G."/>
            <person name="Milet C."/>
            <person name="Luquet G."/>
        </authorList>
    </citation>
    <scope>PROTEIN SEQUENCE</scope>
    <scope>TISSUE SPECIFICITY</scope>
    <source>
        <tissue>Shell</tissue>
    </source>
</reference>
<comment type="tissue specificity">
    <text evidence="1">Nacreous layer of shell.</text>
</comment>
<evidence type="ECO:0000269" key="1">
    <source>
    </source>
</evidence>
<evidence type="ECO:0000303" key="2">
    <source>
    </source>
</evidence>
<sequence length="9" mass="960">FIAGLNGLR</sequence>
<organism>
    <name type="scientific">Nautilus macromphalus</name>
    <name type="common">Bellybutton nautilus</name>
    <dbReference type="NCBI Taxonomy" id="34576"/>
    <lineage>
        <taxon>Eukaryota</taxon>
        <taxon>Metazoa</taxon>
        <taxon>Spiralia</taxon>
        <taxon>Lophotrochozoa</taxon>
        <taxon>Mollusca</taxon>
        <taxon>Cephalopoda</taxon>
        <taxon>Nautiloidea</taxon>
        <taxon>Nautilida</taxon>
        <taxon>Nautilidae</taxon>
        <taxon>Nautilus</taxon>
    </lineage>
</organism>
<feature type="chain" id="PRO_0000371497" description="Uncharacterized protein SMPP16">
    <location>
        <begin position="1" status="less than"/>
        <end position="9" status="greater than"/>
    </location>
</feature>
<feature type="unsure residue" description="I or L" evidence="1">
    <location>
        <position position="2"/>
    </location>
</feature>
<feature type="unsure residue" description="L or I" evidence="1">
    <location>
        <position position="5"/>
    </location>
</feature>
<feature type="unsure residue" description="L or I" evidence="1">
    <location>
        <position position="8"/>
    </location>
</feature>
<feature type="non-terminal residue" evidence="2">
    <location>
        <position position="1"/>
    </location>
</feature>
<feature type="non-terminal residue" evidence="2">
    <location>
        <position position="9"/>
    </location>
</feature>
<protein>
    <recommendedName>
        <fullName evidence="2">Uncharacterized protein SMPP16</fullName>
    </recommendedName>
</protein>
<accession>P85381</accession>